<accession>B9KQ55</accession>
<keyword id="KW-0028">Amino-acid biosynthesis</keyword>
<keyword id="KW-0413">Isomerase</keyword>
<keyword id="KW-0486">Methionine biosynthesis</keyword>
<sequence length="364" mass="39348">MKINGTPFRSIWCEAGEVRIIDQRWLPHELRIVPLRTRAEFAAAIRDMWVRGAPLIGATAAWGMAVQMAEDPSDASLAETWQVLHETRPTAINLRWALNEMRRLLAPLPPSERAAAAARRAAEICDEDVEINRRIGAHGLTLIREIAERKRGRVNILTHCNAGWLATVDWGTATSPIYHALEAGIDVHVFVDETRPRNQGALLTAWEMNSHGVSHDLIVDNAGGHLMQHGEVDLVIVGTDRTTAQGDVCNKIGTYLKALAAKANGVPFYVALPSPTIDWTVRDGVAEIPIEERSSAEVTHVQGKAPDGSVISVQISPDGTGARNPAFDVTPASLVTGLITERGICAAEAGAMEALFPEAARSAA</sequence>
<gene>
    <name evidence="1" type="primary">mtnA</name>
    <name type="ordered locus">RSKD131_0702</name>
</gene>
<comment type="function">
    <text evidence="1">Catalyzes the interconversion of methylthioribose-1-phosphate (MTR-1-P) into methylthioribulose-1-phosphate (MTRu-1-P).</text>
</comment>
<comment type="catalytic activity">
    <reaction evidence="1">
        <text>5-(methylsulfanyl)-alpha-D-ribose 1-phosphate = 5-(methylsulfanyl)-D-ribulose 1-phosphate</text>
        <dbReference type="Rhea" id="RHEA:19989"/>
        <dbReference type="ChEBI" id="CHEBI:58533"/>
        <dbReference type="ChEBI" id="CHEBI:58548"/>
        <dbReference type="EC" id="5.3.1.23"/>
    </reaction>
</comment>
<comment type="pathway">
    <text evidence="1">Amino-acid biosynthesis; L-methionine biosynthesis via salvage pathway; L-methionine from S-methyl-5-thio-alpha-D-ribose 1-phosphate: step 1/6.</text>
</comment>
<comment type="similarity">
    <text evidence="2">Belongs to the eIF-2B alpha/beta/delta subunits family. MtnA subfamily.</text>
</comment>
<feature type="chain" id="PRO_1000187368" description="Methylthioribose-1-phosphate isomerase">
    <location>
        <begin position="1"/>
        <end position="364"/>
    </location>
</feature>
<feature type="active site" description="Proton donor" evidence="1">
    <location>
        <position position="240"/>
    </location>
</feature>
<feature type="binding site" evidence="1">
    <location>
        <begin position="51"/>
        <end position="53"/>
    </location>
    <ligand>
        <name>substrate</name>
    </ligand>
</feature>
<feature type="binding site" evidence="1">
    <location>
        <position position="88"/>
    </location>
    <ligand>
        <name>substrate</name>
    </ligand>
</feature>
<feature type="binding site" evidence="1">
    <location>
        <position position="199"/>
    </location>
    <ligand>
        <name>substrate</name>
    </ligand>
</feature>
<feature type="binding site" evidence="1">
    <location>
        <begin position="250"/>
        <end position="251"/>
    </location>
    <ligand>
        <name>substrate</name>
    </ligand>
</feature>
<feature type="site" description="Transition state stabilizer" evidence="1">
    <location>
        <position position="160"/>
    </location>
</feature>
<organism>
    <name type="scientific">Cereibacter sphaeroides (strain KD131 / KCTC 12085)</name>
    <name type="common">Rhodobacter sphaeroides</name>
    <dbReference type="NCBI Taxonomy" id="557760"/>
    <lineage>
        <taxon>Bacteria</taxon>
        <taxon>Pseudomonadati</taxon>
        <taxon>Pseudomonadota</taxon>
        <taxon>Alphaproteobacteria</taxon>
        <taxon>Rhodobacterales</taxon>
        <taxon>Paracoccaceae</taxon>
        <taxon>Cereibacter</taxon>
    </lineage>
</organism>
<evidence type="ECO:0000255" key="1">
    <source>
        <dbReference type="HAMAP-Rule" id="MF_01678"/>
    </source>
</evidence>
<evidence type="ECO:0000305" key="2"/>
<reference key="1">
    <citation type="journal article" date="2009" name="J. Bacteriol.">
        <title>Complete genome sequence of Rhodobacter sphaeroides KD131.</title>
        <authorList>
            <person name="Lim S.-K."/>
            <person name="Kim S.J."/>
            <person name="Cha S.H."/>
            <person name="Oh Y.-K."/>
            <person name="Rhee H.-J."/>
            <person name="Kim M.-S."/>
            <person name="Lee J.K."/>
        </authorList>
    </citation>
    <scope>NUCLEOTIDE SEQUENCE [LARGE SCALE GENOMIC DNA]</scope>
    <source>
        <strain>KD131 / KCTC 12085</strain>
    </source>
</reference>
<dbReference type="EC" id="5.3.1.23" evidence="1"/>
<dbReference type="EMBL" id="CP001150">
    <property type="protein sequence ID" value="ACM00562.1"/>
    <property type="molecule type" value="Genomic_DNA"/>
</dbReference>
<dbReference type="RefSeq" id="WP_012643899.1">
    <property type="nucleotide sequence ID" value="NC_011963.1"/>
</dbReference>
<dbReference type="SMR" id="B9KQ55"/>
<dbReference type="GeneID" id="67446148"/>
<dbReference type="KEGG" id="rsk:RSKD131_0702"/>
<dbReference type="HOGENOM" id="CLU_016218_1_2_5"/>
<dbReference type="UniPathway" id="UPA00904">
    <property type="reaction ID" value="UER00874"/>
</dbReference>
<dbReference type="GO" id="GO:0046523">
    <property type="term" value="F:S-methyl-5-thioribose-1-phosphate isomerase activity"/>
    <property type="evidence" value="ECO:0007669"/>
    <property type="project" value="UniProtKB-UniRule"/>
</dbReference>
<dbReference type="GO" id="GO:0019509">
    <property type="term" value="P:L-methionine salvage from methylthioadenosine"/>
    <property type="evidence" value="ECO:0007669"/>
    <property type="project" value="UniProtKB-UniRule"/>
</dbReference>
<dbReference type="FunFam" id="1.20.120.420:FF:000003">
    <property type="entry name" value="Methylthioribose-1-phosphate isomerase"/>
    <property type="match status" value="1"/>
</dbReference>
<dbReference type="FunFam" id="3.40.50.10470:FF:000006">
    <property type="entry name" value="Methylthioribose-1-phosphate isomerase"/>
    <property type="match status" value="1"/>
</dbReference>
<dbReference type="Gene3D" id="1.20.120.420">
    <property type="entry name" value="translation initiation factor eif-2b, domain 1"/>
    <property type="match status" value="1"/>
</dbReference>
<dbReference type="Gene3D" id="3.40.50.10470">
    <property type="entry name" value="Translation initiation factor eif-2b, domain 2"/>
    <property type="match status" value="1"/>
</dbReference>
<dbReference type="HAMAP" id="MF_01678">
    <property type="entry name" value="Salvage_MtnA"/>
    <property type="match status" value="1"/>
</dbReference>
<dbReference type="InterPro" id="IPR000649">
    <property type="entry name" value="IF-2B-related"/>
</dbReference>
<dbReference type="InterPro" id="IPR005251">
    <property type="entry name" value="IF-M1Pi"/>
</dbReference>
<dbReference type="InterPro" id="IPR042529">
    <property type="entry name" value="IF_2B-like_C"/>
</dbReference>
<dbReference type="InterPro" id="IPR011559">
    <property type="entry name" value="Initiation_fac_2B_a/b/d"/>
</dbReference>
<dbReference type="InterPro" id="IPR027363">
    <property type="entry name" value="M1Pi_N"/>
</dbReference>
<dbReference type="InterPro" id="IPR037171">
    <property type="entry name" value="NagB/RpiA_transferase-like"/>
</dbReference>
<dbReference type="NCBIfam" id="TIGR00524">
    <property type="entry name" value="eIF-2B_rel"/>
    <property type="match status" value="1"/>
</dbReference>
<dbReference type="NCBIfam" id="NF004326">
    <property type="entry name" value="PRK05720.1"/>
    <property type="match status" value="1"/>
</dbReference>
<dbReference type="NCBIfam" id="TIGR00512">
    <property type="entry name" value="salvage_mtnA"/>
    <property type="match status" value="1"/>
</dbReference>
<dbReference type="PANTHER" id="PTHR43475">
    <property type="entry name" value="METHYLTHIORIBOSE-1-PHOSPHATE ISOMERASE"/>
    <property type="match status" value="1"/>
</dbReference>
<dbReference type="PANTHER" id="PTHR43475:SF1">
    <property type="entry name" value="METHYLTHIORIBOSE-1-PHOSPHATE ISOMERASE"/>
    <property type="match status" value="1"/>
</dbReference>
<dbReference type="Pfam" id="PF01008">
    <property type="entry name" value="IF-2B"/>
    <property type="match status" value="1"/>
</dbReference>
<dbReference type="SUPFAM" id="SSF100950">
    <property type="entry name" value="NagB/RpiA/CoA transferase-like"/>
    <property type="match status" value="1"/>
</dbReference>
<name>MTNA_CERSK</name>
<proteinExistence type="inferred from homology"/>
<protein>
    <recommendedName>
        <fullName evidence="1">Methylthioribose-1-phosphate isomerase</fullName>
        <shortName evidence="1">M1Pi</shortName>
        <shortName evidence="1">MTR-1-P isomerase</shortName>
        <ecNumber evidence="1">5.3.1.23</ecNumber>
    </recommendedName>
    <alternativeName>
        <fullName evidence="1">S-methyl-5-thioribose-1-phosphate isomerase</fullName>
    </alternativeName>
</protein>